<protein>
    <recommendedName>
        <fullName>ATP-dependent RNA helicase eIF4A</fullName>
        <ecNumber>3.6.4.13</ecNumber>
    </recommendedName>
    <alternativeName>
        <fullName>Eukaryotic initiation factor 4A</fullName>
        <shortName>eIF-4A</shortName>
    </alternativeName>
    <alternativeName>
        <fullName>Stimulator factor I 37 kDa component</fullName>
    </alternativeName>
    <alternativeName>
        <fullName>Translation initiation factor 1/2</fullName>
    </alternativeName>
    <alternativeName>
        <fullName>p37</fullName>
    </alternativeName>
</protein>
<dbReference type="EC" id="3.6.4.13"/>
<dbReference type="EMBL" id="AAFW02000152">
    <property type="protein sequence ID" value="EDN59962.1"/>
    <property type="molecule type" value="Genomic_DNA"/>
</dbReference>
<dbReference type="EMBL" id="AAFW02000044">
    <property type="protein sequence ID" value="EDN63243.1"/>
    <property type="molecule type" value="Genomic_DNA"/>
</dbReference>
<dbReference type="SMR" id="A6ZQJ1"/>
<dbReference type="IntAct" id="A6ZQJ1">
    <property type="interactions" value="2"/>
</dbReference>
<dbReference type="MINT" id="A6ZQJ1"/>
<dbReference type="TopDownProteomics" id="A6ZQJ1"/>
<dbReference type="HOGENOM" id="CLU_003041_1_0_1"/>
<dbReference type="Proteomes" id="UP000007060">
    <property type="component" value="Unassembled WGS sequence"/>
</dbReference>
<dbReference type="GO" id="GO:0005737">
    <property type="term" value="C:cytoplasm"/>
    <property type="evidence" value="ECO:0007669"/>
    <property type="project" value="UniProtKB-SubCell"/>
</dbReference>
<dbReference type="GO" id="GO:0005524">
    <property type="term" value="F:ATP binding"/>
    <property type="evidence" value="ECO:0007669"/>
    <property type="project" value="UniProtKB-KW"/>
</dbReference>
<dbReference type="GO" id="GO:0016887">
    <property type="term" value="F:ATP hydrolysis activity"/>
    <property type="evidence" value="ECO:0007669"/>
    <property type="project" value="RHEA"/>
</dbReference>
<dbReference type="GO" id="GO:0003723">
    <property type="term" value="F:RNA binding"/>
    <property type="evidence" value="ECO:0007669"/>
    <property type="project" value="UniProtKB-KW"/>
</dbReference>
<dbReference type="GO" id="GO:0003724">
    <property type="term" value="F:RNA helicase activity"/>
    <property type="evidence" value="ECO:0007669"/>
    <property type="project" value="UniProtKB-EC"/>
</dbReference>
<dbReference type="GO" id="GO:0003743">
    <property type="term" value="F:translation initiation factor activity"/>
    <property type="evidence" value="ECO:0007669"/>
    <property type="project" value="UniProtKB-KW"/>
</dbReference>
<dbReference type="CDD" id="cd18046">
    <property type="entry name" value="DEADc_EIF4AII_EIF4AI_DDX2"/>
    <property type="match status" value="1"/>
</dbReference>
<dbReference type="CDD" id="cd18787">
    <property type="entry name" value="SF2_C_DEAD"/>
    <property type="match status" value="1"/>
</dbReference>
<dbReference type="FunFam" id="3.40.50.300:FF:000089">
    <property type="entry name" value="Eukaryotic initiation factor 4A-II"/>
    <property type="match status" value="1"/>
</dbReference>
<dbReference type="FunFam" id="3.40.50.300:FF:000031">
    <property type="entry name" value="Eukaryotic initiation factor 4A-III"/>
    <property type="match status" value="1"/>
</dbReference>
<dbReference type="Gene3D" id="3.40.50.300">
    <property type="entry name" value="P-loop containing nucleotide triphosphate hydrolases"/>
    <property type="match status" value="2"/>
</dbReference>
<dbReference type="InterPro" id="IPR011545">
    <property type="entry name" value="DEAD/DEAH_box_helicase_dom"/>
</dbReference>
<dbReference type="InterPro" id="IPR044728">
    <property type="entry name" value="EIF4A_DEADc"/>
</dbReference>
<dbReference type="InterPro" id="IPR014001">
    <property type="entry name" value="Helicase_ATP-bd"/>
</dbReference>
<dbReference type="InterPro" id="IPR001650">
    <property type="entry name" value="Helicase_C-like"/>
</dbReference>
<dbReference type="InterPro" id="IPR027417">
    <property type="entry name" value="P-loop_NTPase"/>
</dbReference>
<dbReference type="InterPro" id="IPR000629">
    <property type="entry name" value="RNA-helicase_DEAD-box_CS"/>
</dbReference>
<dbReference type="InterPro" id="IPR014014">
    <property type="entry name" value="RNA_helicase_DEAD_Q_motif"/>
</dbReference>
<dbReference type="PANTHER" id="PTHR47958">
    <property type="entry name" value="ATP-DEPENDENT RNA HELICASE DBP3"/>
    <property type="match status" value="1"/>
</dbReference>
<dbReference type="Pfam" id="PF00270">
    <property type="entry name" value="DEAD"/>
    <property type="match status" value="1"/>
</dbReference>
<dbReference type="Pfam" id="PF00271">
    <property type="entry name" value="Helicase_C"/>
    <property type="match status" value="1"/>
</dbReference>
<dbReference type="SMART" id="SM00487">
    <property type="entry name" value="DEXDc"/>
    <property type="match status" value="1"/>
</dbReference>
<dbReference type="SMART" id="SM00490">
    <property type="entry name" value="HELICc"/>
    <property type="match status" value="1"/>
</dbReference>
<dbReference type="SUPFAM" id="SSF52540">
    <property type="entry name" value="P-loop containing nucleoside triphosphate hydrolases"/>
    <property type="match status" value="2"/>
</dbReference>
<dbReference type="PROSITE" id="PS00039">
    <property type="entry name" value="DEAD_ATP_HELICASE"/>
    <property type="match status" value="1"/>
</dbReference>
<dbReference type="PROSITE" id="PS51192">
    <property type="entry name" value="HELICASE_ATP_BIND_1"/>
    <property type="match status" value="1"/>
</dbReference>
<dbReference type="PROSITE" id="PS51194">
    <property type="entry name" value="HELICASE_CTER"/>
    <property type="match status" value="1"/>
</dbReference>
<dbReference type="PROSITE" id="PS51195">
    <property type="entry name" value="Q_MOTIF"/>
    <property type="match status" value="1"/>
</dbReference>
<organism>
    <name type="scientific">Saccharomyces cerevisiae (strain YJM789)</name>
    <name type="common">Baker's yeast</name>
    <dbReference type="NCBI Taxonomy" id="307796"/>
    <lineage>
        <taxon>Eukaryota</taxon>
        <taxon>Fungi</taxon>
        <taxon>Dikarya</taxon>
        <taxon>Ascomycota</taxon>
        <taxon>Saccharomycotina</taxon>
        <taxon>Saccharomycetes</taxon>
        <taxon>Saccharomycetales</taxon>
        <taxon>Saccharomycetaceae</taxon>
        <taxon>Saccharomyces</taxon>
    </lineage>
</organism>
<sequence>MSEGITDIEESQIQTNYDKVVYKFDDMELDENLLRGVFGYGFEEPSAIQQRAIMPIIEGHDVLAQAQSGTGKTGTFSIAALQRIDTSVKAPQALMLAPTRELALQIQKVVMALAFHMDIKVHACIGGTSFVEDAEGLRDAQIVVGTPGRVFDNIQRRRFRTDKIKMFILDEADEMLSSGFKEQIYQIFTLLPPTTQVVLLSATMPNDVLEVTTKFMRNPVRILVKKDELTLEGIKQFYVNVEEEEYKYECLTDLYDSISVTQAVIFCNTRRKVEELTTKLRNDKFTVSAIYSDLPQQERDTIMKEFRSGSSRILISTDLLARGIDVQQVSLVINYDLPANKENYIHRIGRGGRFGRKGVAINFVTNEDVGAMRELEKFYSTQIEELPSDIATLLN</sequence>
<comment type="function">
    <text evidence="1">ATP-dependent RNA helicase which is a subunit of the eIF4F complex involved in cap recognition and is required for mRNA binding to ribosome. In the current model of translation initiation, eIF4A unwinds RNA secondary structures in the 5'-UTR of mRNAs which is necessary to allow efficient binding of the small ribosomal subunit, and subsequent scanning for the initiator codon (By similarity).</text>
</comment>
<comment type="catalytic activity">
    <reaction>
        <text>ATP + H2O = ADP + phosphate + H(+)</text>
        <dbReference type="Rhea" id="RHEA:13065"/>
        <dbReference type="ChEBI" id="CHEBI:15377"/>
        <dbReference type="ChEBI" id="CHEBI:15378"/>
        <dbReference type="ChEBI" id="CHEBI:30616"/>
        <dbReference type="ChEBI" id="CHEBI:43474"/>
        <dbReference type="ChEBI" id="CHEBI:456216"/>
        <dbReference type="EC" id="3.6.4.13"/>
    </reaction>
</comment>
<comment type="subunit">
    <text evidence="1">Component of the eIF4F complex, which composition varies with external and internal environmental conditions. It is composed of at least eIF4A, eIF4E and eIF4G (By similarity).</text>
</comment>
<comment type="subcellular location">
    <subcellularLocation>
        <location evidence="1">Cytoplasm</location>
    </subcellularLocation>
</comment>
<comment type="domain">
    <text>The Q motif is unique to and characteristic of the DEAD box family of RNA helicases and controls ATP binding and hydrolysis.</text>
</comment>
<comment type="similarity">
    <text evidence="5">Belongs to the DEAD box helicase family. eIF4A subfamily.</text>
</comment>
<evidence type="ECO:0000250" key="1"/>
<evidence type="ECO:0000250" key="2">
    <source>
        <dbReference type="UniProtKB" id="P10081"/>
    </source>
</evidence>
<evidence type="ECO:0000255" key="3">
    <source>
        <dbReference type="PROSITE-ProRule" id="PRU00541"/>
    </source>
</evidence>
<evidence type="ECO:0000255" key="4">
    <source>
        <dbReference type="PROSITE-ProRule" id="PRU00542"/>
    </source>
</evidence>
<evidence type="ECO:0000305" key="5"/>
<keyword id="KW-0007">Acetylation</keyword>
<keyword id="KW-0067">ATP-binding</keyword>
<keyword id="KW-0963">Cytoplasm</keyword>
<keyword id="KW-0347">Helicase</keyword>
<keyword id="KW-0378">Hydrolase</keyword>
<keyword id="KW-0396">Initiation factor</keyword>
<keyword id="KW-0547">Nucleotide-binding</keyword>
<keyword id="KW-0597">Phosphoprotein</keyword>
<keyword id="KW-0648">Protein biosynthesis</keyword>
<keyword id="KW-0694">RNA-binding</keyword>
<name>IF4A_YEAS7</name>
<reference key="1">
    <citation type="journal article" date="2007" name="Proc. Natl. Acad. Sci. U.S.A.">
        <title>Genome sequencing and comparative analysis of Saccharomyces cerevisiae strain YJM789.</title>
        <authorList>
            <person name="Wei W."/>
            <person name="McCusker J.H."/>
            <person name="Hyman R.W."/>
            <person name="Jones T."/>
            <person name="Ning Y."/>
            <person name="Cao Z."/>
            <person name="Gu Z."/>
            <person name="Bruno D."/>
            <person name="Miranda M."/>
            <person name="Nguyen M."/>
            <person name="Wilhelmy J."/>
            <person name="Komp C."/>
            <person name="Tamse R."/>
            <person name="Wang X."/>
            <person name="Jia P."/>
            <person name="Luedi P."/>
            <person name="Oefner P.J."/>
            <person name="David L."/>
            <person name="Dietrich F.S."/>
            <person name="Li Y."/>
            <person name="Davis R.W."/>
            <person name="Steinmetz L.M."/>
        </authorList>
    </citation>
    <scope>NUCLEOTIDE SEQUENCE [LARGE SCALE GENOMIC DNA]</scope>
    <source>
        <strain>YJM789</strain>
    </source>
</reference>
<gene>
    <name type="primary">TIF1</name>
    <name type="synonym">TIF41A</name>
    <name type="ORF">SCY_3152</name>
</gene>
<gene>
    <name type="primary">TIF2</name>
    <name type="synonym">TIF41B</name>
    <name type="ORF">SCY_3429</name>
</gene>
<feature type="initiator methionine" description="Removed" evidence="2">
    <location>
        <position position="1"/>
    </location>
</feature>
<feature type="chain" id="PRO_0000310174" description="ATP-dependent RNA helicase eIF4A">
    <location>
        <begin position="2"/>
        <end position="395"/>
    </location>
</feature>
<feature type="domain" description="Helicase ATP-binding" evidence="3">
    <location>
        <begin position="53"/>
        <end position="222"/>
    </location>
</feature>
<feature type="domain" description="Helicase C-terminal" evidence="4">
    <location>
        <begin position="233"/>
        <end position="394"/>
    </location>
</feature>
<feature type="short sequence motif" description="Q motif">
    <location>
        <begin position="22"/>
        <end position="50"/>
    </location>
</feature>
<feature type="short sequence motif" description="DEAD box">
    <location>
        <begin position="170"/>
        <end position="173"/>
    </location>
</feature>
<feature type="binding site" evidence="3">
    <location>
        <begin position="66"/>
        <end position="73"/>
    </location>
    <ligand>
        <name>ATP</name>
        <dbReference type="ChEBI" id="CHEBI:30616"/>
    </ligand>
</feature>
<feature type="modified residue" description="N-acetylserine" evidence="2">
    <location>
        <position position="2"/>
    </location>
</feature>
<feature type="modified residue" description="Phosphothreonine" evidence="2">
    <location>
        <position position="73"/>
    </location>
</feature>
<feature type="modified residue" description="Phosphoserine" evidence="2">
    <location>
        <position position="77"/>
    </location>
</feature>
<feature type="modified residue" description="Phosphoserine" evidence="2">
    <location>
        <position position="129"/>
    </location>
</feature>
<feature type="modified residue" description="Phosphothreonine" evidence="2">
    <location>
        <position position="146"/>
    </location>
</feature>
<proteinExistence type="inferred from homology"/>
<accession>A6ZQJ1</accession>